<sequence>MRKDAKENRQRIEEIAHKLFDEEGVENISMNRIAKELGIGMGTLYRHFKDKSDLCYYVIQRDLDIFITHFKQIKDDYHSNYEVMQVSLDYLLQFKIDNKALLQCIEAGNNKLRFYQSAFYQELFDFYYDLFKSDDDTYTKFKTDMLLQSLSTSVFAFQIEHRHISIEAYRNYLLNIYLDEVERND</sequence>
<proteinExistence type="predicted"/>
<name>Y2364_STAAN</name>
<keyword id="KW-0238">DNA-binding</keyword>
<keyword id="KW-0804">Transcription</keyword>
<keyword id="KW-0805">Transcription regulation</keyword>
<gene>
    <name type="ordered locus">SA2364</name>
</gene>
<dbReference type="EMBL" id="BA000018">
    <property type="protein sequence ID" value="BAB43669.1"/>
    <property type="molecule type" value="Genomic_DNA"/>
</dbReference>
<dbReference type="PIR" id="C90063">
    <property type="entry name" value="C90063"/>
</dbReference>
<dbReference type="RefSeq" id="WP_001224187.1">
    <property type="nucleotide sequence ID" value="NC_002745.2"/>
</dbReference>
<dbReference type="SMR" id="Q7A3C7"/>
<dbReference type="EnsemblBacteria" id="BAB43669">
    <property type="protein sequence ID" value="BAB43669"/>
    <property type="gene ID" value="BAB43669"/>
</dbReference>
<dbReference type="KEGG" id="sau:SA2364"/>
<dbReference type="HOGENOM" id="CLU_069356_17_2_9"/>
<dbReference type="GO" id="GO:0003677">
    <property type="term" value="F:DNA binding"/>
    <property type="evidence" value="ECO:0007669"/>
    <property type="project" value="UniProtKB-KW"/>
</dbReference>
<dbReference type="Gene3D" id="1.10.357.10">
    <property type="entry name" value="Tetracycline Repressor, domain 2"/>
    <property type="match status" value="1"/>
</dbReference>
<dbReference type="InterPro" id="IPR023772">
    <property type="entry name" value="DNA-bd_HTH_TetR-type_CS"/>
</dbReference>
<dbReference type="InterPro" id="IPR009057">
    <property type="entry name" value="Homeodomain-like_sf"/>
</dbReference>
<dbReference type="InterPro" id="IPR050624">
    <property type="entry name" value="HTH-type_Tx_Regulator"/>
</dbReference>
<dbReference type="InterPro" id="IPR001647">
    <property type="entry name" value="HTH_TetR"/>
</dbReference>
<dbReference type="PANTHER" id="PTHR43479">
    <property type="entry name" value="ACREF/ENVCD OPERON REPRESSOR-RELATED"/>
    <property type="match status" value="1"/>
</dbReference>
<dbReference type="PANTHER" id="PTHR43479:SF11">
    <property type="entry name" value="ACREF_ENVCD OPERON REPRESSOR-RELATED"/>
    <property type="match status" value="1"/>
</dbReference>
<dbReference type="Pfam" id="PF00440">
    <property type="entry name" value="TetR_N"/>
    <property type="match status" value="1"/>
</dbReference>
<dbReference type="PRINTS" id="PR00455">
    <property type="entry name" value="HTHTETR"/>
</dbReference>
<dbReference type="SUPFAM" id="SSF46689">
    <property type="entry name" value="Homeodomain-like"/>
    <property type="match status" value="1"/>
</dbReference>
<dbReference type="PROSITE" id="PS01081">
    <property type="entry name" value="HTH_TETR_1"/>
    <property type="match status" value="1"/>
</dbReference>
<dbReference type="PROSITE" id="PS50977">
    <property type="entry name" value="HTH_TETR_2"/>
    <property type="match status" value="1"/>
</dbReference>
<accession>Q7A3C7</accession>
<evidence type="ECO:0000255" key="1">
    <source>
        <dbReference type="PROSITE-ProRule" id="PRU00335"/>
    </source>
</evidence>
<organism>
    <name type="scientific">Staphylococcus aureus (strain N315)</name>
    <dbReference type="NCBI Taxonomy" id="158879"/>
    <lineage>
        <taxon>Bacteria</taxon>
        <taxon>Bacillati</taxon>
        <taxon>Bacillota</taxon>
        <taxon>Bacilli</taxon>
        <taxon>Bacillales</taxon>
        <taxon>Staphylococcaceae</taxon>
        <taxon>Staphylococcus</taxon>
    </lineage>
</organism>
<feature type="chain" id="PRO_0000286695" description="HTH-type transcriptional regulator SA2364">
    <location>
        <begin position="1"/>
        <end position="185"/>
    </location>
</feature>
<feature type="domain" description="HTH tetR-type" evidence="1">
    <location>
        <begin position="6"/>
        <end position="66"/>
    </location>
</feature>
<feature type="DNA-binding region" description="H-T-H motif" evidence="1">
    <location>
        <begin position="29"/>
        <end position="48"/>
    </location>
</feature>
<reference key="1">
    <citation type="journal article" date="2001" name="Lancet">
        <title>Whole genome sequencing of meticillin-resistant Staphylococcus aureus.</title>
        <authorList>
            <person name="Kuroda M."/>
            <person name="Ohta T."/>
            <person name="Uchiyama I."/>
            <person name="Baba T."/>
            <person name="Yuzawa H."/>
            <person name="Kobayashi I."/>
            <person name="Cui L."/>
            <person name="Oguchi A."/>
            <person name="Aoki K."/>
            <person name="Nagai Y."/>
            <person name="Lian J.-Q."/>
            <person name="Ito T."/>
            <person name="Kanamori M."/>
            <person name="Matsumaru H."/>
            <person name="Maruyama A."/>
            <person name="Murakami H."/>
            <person name="Hosoyama A."/>
            <person name="Mizutani-Ui Y."/>
            <person name="Takahashi N.K."/>
            <person name="Sawano T."/>
            <person name="Inoue R."/>
            <person name="Kaito C."/>
            <person name="Sekimizu K."/>
            <person name="Hirakawa H."/>
            <person name="Kuhara S."/>
            <person name="Goto S."/>
            <person name="Yabuzaki J."/>
            <person name="Kanehisa M."/>
            <person name="Yamashita A."/>
            <person name="Oshima K."/>
            <person name="Furuya K."/>
            <person name="Yoshino C."/>
            <person name="Shiba T."/>
            <person name="Hattori M."/>
            <person name="Ogasawara N."/>
            <person name="Hayashi H."/>
            <person name="Hiramatsu K."/>
        </authorList>
    </citation>
    <scope>NUCLEOTIDE SEQUENCE [LARGE SCALE GENOMIC DNA]</scope>
    <source>
        <strain>N315</strain>
    </source>
</reference>
<protein>
    <recommendedName>
        <fullName>HTH-type transcriptional regulator SA2364</fullName>
    </recommendedName>
</protein>